<name>MTNA_PARBP</name>
<feature type="chain" id="PRO_0000402037" description="Methylthioribose-1-phosphate isomerase">
    <location>
        <begin position="1"/>
        <end position="386"/>
    </location>
</feature>
<feature type="active site" description="Proton donor" evidence="1">
    <location>
        <position position="261"/>
    </location>
</feature>
<feature type="site" description="Transition state stabilizer" evidence="1">
    <location>
        <position position="179"/>
    </location>
</feature>
<evidence type="ECO:0000255" key="1">
    <source>
        <dbReference type="HAMAP-Rule" id="MF_03119"/>
    </source>
</evidence>
<organism>
    <name type="scientific">Paracoccidioides brasiliensis (strain Pb03)</name>
    <dbReference type="NCBI Taxonomy" id="482561"/>
    <lineage>
        <taxon>Eukaryota</taxon>
        <taxon>Fungi</taxon>
        <taxon>Dikarya</taxon>
        <taxon>Ascomycota</taxon>
        <taxon>Pezizomycotina</taxon>
        <taxon>Eurotiomycetes</taxon>
        <taxon>Eurotiomycetidae</taxon>
        <taxon>Onygenales</taxon>
        <taxon>Ajellomycetaceae</taxon>
        <taxon>Paracoccidioides</taxon>
    </lineage>
</organism>
<protein>
    <recommendedName>
        <fullName evidence="1">Methylthioribose-1-phosphate isomerase</fullName>
        <shortName evidence="1">M1Pi</shortName>
        <shortName evidence="1">MTR-1-P isomerase</shortName>
        <ecNumber evidence="1">5.3.1.23</ecNumber>
    </recommendedName>
    <alternativeName>
        <fullName evidence="1">S-methyl-5-thioribose-1-phosphate isomerase</fullName>
    </alternativeName>
    <alternativeName>
        <fullName evidence="1">Translation initiation factor eIF-2B subunit alpha/beta/delta-like protein</fullName>
    </alternativeName>
</protein>
<gene>
    <name evidence="1" type="primary">MRI1</name>
    <name type="ORF">PABG_01393</name>
</gene>
<sequence length="386" mass="41251">MPLIAISYSHGKLSILNQLFLPHQTTYDPIYSACDAWHAIHDMRVRGAPAIAIVAALSVAVELYDLIQKGKLSDQAKEVEIFIREKLEYIASSRPTAVNLVEAAGRLGKIVVARSCGEGVTGREVAEEYIRAAEKMLEDDVKDNRGIGEFGAKWIMKQAIDGAEGEGEGKGKVAVLTHCNTGSLATAGYGTALGVIRSLHAANSLKHAYCTETRPYNQGSRLTAYELVHDNIPATLITDSMAAALLAHKSAGVGAIVVGADRVAANGDTANKIGTYGLAVLAKHHGVKFLVAAPRTTIDMNTKSGEGIAIEERPRQEMTRIRGPRVGGEQDGLGAMETITVAADGIDVWNPAFDVTPASLIDGIITEIGVVEKDRDGEFHLERVFE</sequence>
<dbReference type="EC" id="5.3.1.23" evidence="1"/>
<dbReference type="EMBL" id="KN305532">
    <property type="protein sequence ID" value="EEH19074.1"/>
    <property type="molecule type" value="Genomic_DNA"/>
</dbReference>
<dbReference type="SMR" id="C0S1C8"/>
<dbReference type="VEuPathDB" id="FungiDB:PABG_01393"/>
<dbReference type="HOGENOM" id="CLU_016218_1_3_1"/>
<dbReference type="OrthoDB" id="36798at33183"/>
<dbReference type="UniPathway" id="UPA00904">
    <property type="reaction ID" value="UER00874"/>
</dbReference>
<dbReference type="GO" id="GO:0005737">
    <property type="term" value="C:cytoplasm"/>
    <property type="evidence" value="ECO:0007669"/>
    <property type="project" value="UniProtKB-SubCell"/>
</dbReference>
<dbReference type="GO" id="GO:0005634">
    <property type="term" value="C:nucleus"/>
    <property type="evidence" value="ECO:0007669"/>
    <property type="project" value="UniProtKB-SubCell"/>
</dbReference>
<dbReference type="GO" id="GO:0046523">
    <property type="term" value="F:S-methyl-5-thioribose-1-phosphate isomerase activity"/>
    <property type="evidence" value="ECO:0007669"/>
    <property type="project" value="UniProtKB-UniRule"/>
</dbReference>
<dbReference type="GO" id="GO:0019509">
    <property type="term" value="P:L-methionine salvage from methylthioadenosine"/>
    <property type="evidence" value="ECO:0007669"/>
    <property type="project" value="UniProtKB-UniRule"/>
</dbReference>
<dbReference type="FunFam" id="1.20.120.420:FF:000003">
    <property type="entry name" value="Methylthioribose-1-phosphate isomerase"/>
    <property type="match status" value="1"/>
</dbReference>
<dbReference type="FunFam" id="3.40.50.10470:FF:000010">
    <property type="entry name" value="Methylthioribose-1-phosphate isomerase"/>
    <property type="match status" value="1"/>
</dbReference>
<dbReference type="Gene3D" id="1.20.120.420">
    <property type="entry name" value="translation initiation factor eif-2b, domain 1"/>
    <property type="match status" value="1"/>
</dbReference>
<dbReference type="Gene3D" id="3.40.50.10470">
    <property type="entry name" value="Translation initiation factor eif-2b, domain 2"/>
    <property type="match status" value="1"/>
</dbReference>
<dbReference type="HAMAP" id="MF_01678">
    <property type="entry name" value="Salvage_MtnA"/>
    <property type="match status" value="1"/>
</dbReference>
<dbReference type="InterPro" id="IPR000649">
    <property type="entry name" value="IF-2B-related"/>
</dbReference>
<dbReference type="InterPro" id="IPR005251">
    <property type="entry name" value="IF-M1Pi"/>
</dbReference>
<dbReference type="InterPro" id="IPR042529">
    <property type="entry name" value="IF_2B-like_C"/>
</dbReference>
<dbReference type="InterPro" id="IPR011559">
    <property type="entry name" value="Initiation_fac_2B_a/b/d"/>
</dbReference>
<dbReference type="InterPro" id="IPR027363">
    <property type="entry name" value="M1Pi_N"/>
</dbReference>
<dbReference type="InterPro" id="IPR037171">
    <property type="entry name" value="NagB/RpiA_transferase-like"/>
</dbReference>
<dbReference type="NCBIfam" id="TIGR00524">
    <property type="entry name" value="eIF-2B_rel"/>
    <property type="match status" value="1"/>
</dbReference>
<dbReference type="NCBIfam" id="NF004326">
    <property type="entry name" value="PRK05720.1"/>
    <property type="match status" value="1"/>
</dbReference>
<dbReference type="NCBIfam" id="TIGR00512">
    <property type="entry name" value="salvage_mtnA"/>
    <property type="match status" value="1"/>
</dbReference>
<dbReference type="PANTHER" id="PTHR43475">
    <property type="entry name" value="METHYLTHIORIBOSE-1-PHOSPHATE ISOMERASE"/>
    <property type="match status" value="1"/>
</dbReference>
<dbReference type="PANTHER" id="PTHR43475:SF1">
    <property type="entry name" value="METHYLTHIORIBOSE-1-PHOSPHATE ISOMERASE"/>
    <property type="match status" value="1"/>
</dbReference>
<dbReference type="Pfam" id="PF01008">
    <property type="entry name" value="IF-2B"/>
    <property type="match status" value="1"/>
</dbReference>
<dbReference type="SUPFAM" id="SSF100950">
    <property type="entry name" value="NagB/RpiA/CoA transferase-like"/>
    <property type="match status" value="1"/>
</dbReference>
<accession>C0S1C8</accession>
<keyword id="KW-0028">Amino-acid biosynthesis</keyword>
<keyword id="KW-0963">Cytoplasm</keyword>
<keyword id="KW-0413">Isomerase</keyword>
<keyword id="KW-0486">Methionine biosynthesis</keyword>
<keyword id="KW-0539">Nucleus</keyword>
<reference key="1">
    <citation type="journal article" date="2011" name="PLoS Genet.">
        <title>Comparative genomic analysis of human fungal pathogens causing paracoccidioidomycosis.</title>
        <authorList>
            <person name="Desjardins C.A."/>
            <person name="Champion M.D."/>
            <person name="Holder J.W."/>
            <person name="Muszewska A."/>
            <person name="Goldberg J."/>
            <person name="Bailao A.M."/>
            <person name="Brigido M.M."/>
            <person name="Ferreira M.E."/>
            <person name="Garcia A.M."/>
            <person name="Grynberg M."/>
            <person name="Gujja S."/>
            <person name="Heiman D.I."/>
            <person name="Henn M.R."/>
            <person name="Kodira C.D."/>
            <person name="Leon-Narvaez H."/>
            <person name="Longo L.V.G."/>
            <person name="Ma L.-J."/>
            <person name="Malavazi I."/>
            <person name="Matsuo A.L."/>
            <person name="Morais F.V."/>
            <person name="Pereira M."/>
            <person name="Rodriguez-Brito S."/>
            <person name="Sakthikumar S."/>
            <person name="Salem-Izacc S.M."/>
            <person name="Sykes S.M."/>
            <person name="Teixeira M.M."/>
            <person name="Vallejo M.C."/>
            <person name="Walter M.E."/>
            <person name="Yandava C."/>
            <person name="Young S."/>
            <person name="Zeng Q."/>
            <person name="Zucker J."/>
            <person name="Felipe M.S."/>
            <person name="Goldman G.H."/>
            <person name="Haas B.J."/>
            <person name="McEwen J.G."/>
            <person name="Nino-Vega G."/>
            <person name="Puccia R."/>
            <person name="San-Blas G."/>
            <person name="Soares C.M."/>
            <person name="Birren B.W."/>
            <person name="Cuomo C.A."/>
        </authorList>
    </citation>
    <scope>NUCLEOTIDE SEQUENCE [LARGE SCALE GENOMIC DNA]</scope>
    <source>
        <strain>Pb03</strain>
    </source>
</reference>
<proteinExistence type="inferred from homology"/>
<comment type="function">
    <text evidence="1">Catalyzes the interconversion of methylthioribose-1-phosphate (MTR-1-P) into methylthioribulose-1-phosphate (MTRu-1-P).</text>
</comment>
<comment type="catalytic activity">
    <reaction evidence="1">
        <text>5-(methylsulfanyl)-alpha-D-ribose 1-phosphate = 5-(methylsulfanyl)-D-ribulose 1-phosphate</text>
        <dbReference type="Rhea" id="RHEA:19989"/>
        <dbReference type="ChEBI" id="CHEBI:58533"/>
        <dbReference type="ChEBI" id="CHEBI:58548"/>
        <dbReference type="EC" id="5.3.1.23"/>
    </reaction>
</comment>
<comment type="pathway">
    <text evidence="1">Amino-acid biosynthesis; L-methionine biosynthesis via salvage pathway; L-methionine from S-methyl-5-thio-alpha-D-ribose 1-phosphate: step 1/6.</text>
</comment>
<comment type="subcellular location">
    <subcellularLocation>
        <location evidence="1">Cytoplasm</location>
    </subcellularLocation>
    <subcellularLocation>
        <location evidence="1">Nucleus</location>
    </subcellularLocation>
</comment>
<comment type="similarity">
    <text evidence="1">Belongs to the eIF-2B alpha/beta/delta subunits family. MtnA subfamily.</text>
</comment>